<name>TPIS_GRAGA</name>
<comment type="catalytic activity">
    <reaction>
        <text>D-glyceraldehyde 3-phosphate = dihydroxyacetone phosphate</text>
        <dbReference type="Rhea" id="RHEA:18585"/>
        <dbReference type="ChEBI" id="CHEBI:57642"/>
        <dbReference type="ChEBI" id="CHEBI:59776"/>
        <dbReference type="EC" id="5.3.1.1"/>
    </reaction>
</comment>
<comment type="pathway">
    <text>Carbohydrate biosynthesis; gluconeogenesis.</text>
</comment>
<comment type="pathway">
    <text>Carbohydrate degradation; glycolysis; D-glyceraldehyde 3-phosphate from glycerone phosphate: step 1/1.</text>
</comment>
<comment type="subunit">
    <text evidence="1">Homodimer.</text>
</comment>
<comment type="subcellular location">
    <subcellularLocation>
        <location evidence="2">Cytoplasm</location>
    </subcellularLocation>
</comment>
<comment type="miscellaneous">
    <text>In plants, there are two types of TPIS, cytosolic and plastid.</text>
</comment>
<comment type="similarity">
    <text evidence="2">Belongs to the triosephosphate isomerase family.</text>
</comment>
<accession>P48492</accession>
<feature type="chain" id="PRO_0000090146" description="Triosephosphate isomerase, cytosolic">
    <location>
        <begin position="1" status="less than"/>
        <end position="250"/>
    </location>
</feature>
<feature type="active site" description="Electrophile" evidence="1">
    <location>
        <position position="87"/>
    </location>
</feature>
<feature type="active site" description="Proton acceptor" evidence="1">
    <location>
        <position position="160"/>
    </location>
</feature>
<feature type="binding site" evidence="1">
    <location>
        <position position="1"/>
    </location>
    <ligand>
        <name>substrate</name>
    </ligand>
</feature>
<feature type="binding site" evidence="1">
    <location>
        <position position="3"/>
    </location>
    <ligand>
        <name>substrate</name>
    </ligand>
</feature>
<feature type="non-terminal residue">
    <location>
        <position position="1"/>
    </location>
</feature>
<dbReference type="EC" id="5.3.1.1"/>
<dbReference type="EMBL" id="L38662">
    <property type="protein sequence ID" value="AAB01378.1"/>
    <property type="molecule type" value="Genomic_DNA"/>
</dbReference>
<dbReference type="PIR" id="S59523">
    <property type="entry name" value="S59523"/>
</dbReference>
<dbReference type="SMR" id="P48492"/>
<dbReference type="UniPathway" id="UPA00109">
    <property type="reaction ID" value="UER00189"/>
</dbReference>
<dbReference type="UniPathway" id="UPA00138"/>
<dbReference type="GO" id="GO:0005829">
    <property type="term" value="C:cytosol"/>
    <property type="evidence" value="ECO:0007669"/>
    <property type="project" value="TreeGrafter"/>
</dbReference>
<dbReference type="GO" id="GO:0004807">
    <property type="term" value="F:triose-phosphate isomerase activity"/>
    <property type="evidence" value="ECO:0007669"/>
    <property type="project" value="UniProtKB-EC"/>
</dbReference>
<dbReference type="GO" id="GO:0006094">
    <property type="term" value="P:gluconeogenesis"/>
    <property type="evidence" value="ECO:0007669"/>
    <property type="project" value="UniProtKB-UniPathway"/>
</dbReference>
<dbReference type="GO" id="GO:0046166">
    <property type="term" value="P:glyceraldehyde-3-phosphate biosynthetic process"/>
    <property type="evidence" value="ECO:0007669"/>
    <property type="project" value="TreeGrafter"/>
</dbReference>
<dbReference type="GO" id="GO:0019563">
    <property type="term" value="P:glycerol catabolic process"/>
    <property type="evidence" value="ECO:0007669"/>
    <property type="project" value="TreeGrafter"/>
</dbReference>
<dbReference type="GO" id="GO:0006096">
    <property type="term" value="P:glycolytic process"/>
    <property type="evidence" value="ECO:0007669"/>
    <property type="project" value="UniProtKB-UniPathway"/>
</dbReference>
<dbReference type="CDD" id="cd00311">
    <property type="entry name" value="TIM"/>
    <property type="match status" value="1"/>
</dbReference>
<dbReference type="FunFam" id="3.20.20.70:FF:000016">
    <property type="entry name" value="Triosephosphate isomerase"/>
    <property type="match status" value="1"/>
</dbReference>
<dbReference type="Gene3D" id="3.20.20.70">
    <property type="entry name" value="Aldolase class I"/>
    <property type="match status" value="1"/>
</dbReference>
<dbReference type="HAMAP" id="MF_00147_B">
    <property type="entry name" value="TIM_B"/>
    <property type="match status" value="1"/>
</dbReference>
<dbReference type="InterPro" id="IPR013785">
    <property type="entry name" value="Aldolase_TIM"/>
</dbReference>
<dbReference type="InterPro" id="IPR035990">
    <property type="entry name" value="TIM_sf"/>
</dbReference>
<dbReference type="InterPro" id="IPR022896">
    <property type="entry name" value="TrioseP_Isoase_bac/euk"/>
</dbReference>
<dbReference type="InterPro" id="IPR000652">
    <property type="entry name" value="Triosephosphate_isomerase"/>
</dbReference>
<dbReference type="InterPro" id="IPR020861">
    <property type="entry name" value="Triosephosphate_isomerase_AS"/>
</dbReference>
<dbReference type="NCBIfam" id="TIGR00419">
    <property type="entry name" value="tim"/>
    <property type="match status" value="1"/>
</dbReference>
<dbReference type="PANTHER" id="PTHR21139">
    <property type="entry name" value="TRIOSEPHOSPHATE ISOMERASE"/>
    <property type="match status" value="1"/>
</dbReference>
<dbReference type="PANTHER" id="PTHR21139:SF2">
    <property type="entry name" value="TRIOSEPHOSPHATE ISOMERASE"/>
    <property type="match status" value="1"/>
</dbReference>
<dbReference type="Pfam" id="PF00121">
    <property type="entry name" value="TIM"/>
    <property type="match status" value="1"/>
</dbReference>
<dbReference type="SUPFAM" id="SSF51351">
    <property type="entry name" value="Triosephosphate isomerase (TIM)"/>
    <property type="match status" value="1"/>
</dbReference>
<dbReference type="PROSITE" id="PS00171">
    <property type="entry name" value="TIM_1"/>
    <property type="match status" value="1"/>
</dbReference>
<dbReference type="PROSITE" id="PS51440">
    <property type="entry name" value="TIM_2"/>
    <property type="match status" value="1"/>
</dbReference>
<gene>
    <name type="primary">TPI1</name>
</gene>
<proteinExistence type="inferred from homology"/>
<reference key="1">
    <citation type="journal article" date="1995" name="Curr. Genet.">
        <title>Cloning and characterization of the nuclear gene and cDNAs for triosephosphate isomerase of the marine red alga Gracilaria verrucosa.</title>
        <authorList>
            <person name="Zhou Y.H."/>
            <person name="Ragan M.A."/>
        </authorList>
    </citation>
    <scope>NUCLEOTIDE SEQUENCE [GENOMIC DNA]</scope>
</reference>
<protein>
    <recommendedName>
        <fullName>Triosephosphate isomerase, cytosolic</fullName>
        <shortName>TIM</shortName>
        <shortName>Triose-phosphate isomerase</shortName>
        <ecNumber>5.3.1.1</ecNumber>
    </recommendedName>
</protein>
<organism>
    <name type="scientific">Gracilaria gracilis</name>
    <name type="common">Red alga</name>
    <dbReference type="NCBI Taxonomy" id="2777"/>
    <lineage>
        <taxon>Eukaryota</taxon>
        <taxon>Rhodophyta</taxon>
        <taxon>Florideophyceae</taxon>
        <taxon>Rhodymeniophycidae</taxon>
        <taxon>Gracilariales</taxon>
        <taxon>Gracilariaceae</taxon>
        <taxon>Gracilaria</taxon>
    </lineage>
</organism>
<evidence type="ECO:0000250" key="1"/>
<evidence type="ECO:0000305" key="2"/>
<sequence>NWKCNLSKADIAELVSAFNAAPPIDAAHVQVVVAPPAVYLDSTRQALRADFDTSAQNAWISKGGAFTGELDAAMVKDVGAEWVILGHSERRHIAQLKESDHTIAMKAAYALQHASLGVIYCIGELLEERESGQTIAVCERQLQALSDAISDWSDVVIAYEPVWAIGTGKVATPEQAEQVHEAVRAWLANNVSPQVAASTRILYGGSVSPANCESLAKQPNIDGFLVGGASMKPTFLEIVDSYKATLAEAV</sequence>
<keyword id="KW-0963">Cytoplasm</keyword>
<keyword id="KW-0312">Gluconeogenesis</keyword>
<keyword id="KW-0324">Glycolysis</keyword>
<keyword id="KW-0413">Isomerase</keyword>